<organism>
    <name type="scientific">Gallus gallus</name>
    <name type="common">Chicken</name>
    <dbReference type="NCBI Taxonomy" id="9031"/>
    <lineage>
        <taxon>Eukaryota</taxon>
        <taxon>Metazoa</taxon>
        <taxon>Chordata</taxon>
        <taxon>Craniata</taxon>
        <taxon>Vertebrata</taxon>
        <taxon>Euteleostomi</taxon>
        <taxon>Archelosauria</taxon>
        <taxon>Archosauria</taxon>
        <taxon>Dinosauria</taxon>
        <taxon>Saurischia</taxon>
        <taxon>Theropoda</taxon>
        <taxon>Coelurosauria</taxon>
        <taxon>Aves</taxon>
        <taxon>Neognathae</taxon>
        <taxon>Galloanserae</taxon>
        <taxon>Galliformes</taxon>
        <taxon>Phasianidae</taxon>
        <taxon>Phasianinae</taxon>
        <taxon>Gallus</taxon>
    </lineage>
</organism>
<sequence>MAPGSRSWGAVLLLAAMLPAACGSCGADGGPLEPFDALYASGVEAYYGGDFAGAARCLEQALRSRRELRAERLRCRRRCRGQVRLAALGAGPAGELPFFGALLRRAGCLRSCEEPRLGAASRHRAAEEVRSDFQRRVPYSYLQRAYIQLNKLEEAANAAHTFFMANPEHMEIQQDIENYKTTAGKVSLIDLEAKPHMEDYSAGVRHYDKEEYGLAITFLERALEGYYAEDEDCQIMCEGPQRFEEHEYLEYKAGLYEAIADHYMQVLACKHDCIRELATRSGRISPIENFLPLHYDYLQFAYYRVGDYVKALECARSYLLFHPDDEDVLENAAYYEGLLEGTVDPATIKPRKEAKALLRRHKLESHLLRVAAVGLGFTYTEPNYWKRYGARQDEHSVPSSISSEPEDGPRLSLTKKPTPKPDRELKEGGPLLYSDVKFVYNSQQLNGTQRVLLDNVISEEQCRELHRVASGIMLAGDGYRGKTSPHTPNERFEGATVLKALKYGYEGRVPLKSARLFYDISEKARRIVESYFMLNSTLYFSYTHLVCRTALSGQQERRNDLSHPIHADNCLLDPEANECWKEPPAYTFRDYSALLYMNADFEGGEFIFTEMDAKTVTASIKPKCGRMVSFSSGGENPHGVKAVTKGQRCAVALWFTLDPLYRELERIQADEVIAMLDQEHVGRSEMNINPKDEL</sequence>
<evidence type="ECO:0000250" key="1"/>
<evidence type="ECO:0000250" key="2">
    <source>
        <dbReference type="UniProtKB" id="Q8CG71"/>
    </source>
</evidence>
<evidence type="ECO:0000250" key="3">
    <source>
        <dbReference type="UniProtKB" id="Q8IVL5"/>
    </source>
</evidence>
<evidence type="ECO:0000255" key="4"/>
<evidence type="ECO:0000255" key="5">
    <source>
        <dbReference type="PROSITE-ProRule" id="PRU00805"/>
    </source>
</evidence>
<evidence type="ECO:0000255" key="6">
    <source>
        <dbReference type="PROSITE-ProRule" id="PRU10138"/>
    </source>
</evidence>
<evidence type="ECO:0000256" key="7">
    <source>
        <dbReference type="SAM" id="MobiDB-lite"/>
    </source>
</evidence>
<evidence type="ECO:0000305" key="8"/>
<protein>
    <recommendedName>
        <fullName evidence="3">Prolyl 3-hydroxylase 2</fullName>
        <ecNumber evidence="3">1.14.11.7</ecNumber>
    </recommendedName>
    <alternativeName>
        <fullName evidence="3">Leprecan-like protein 1</fullName>
    </alternativeName>
</protein>
<accession>Q6JHU7</accession>
<feature type="signal peptide" evidence="4">
    <location>
        <begin position="1"/>
        <end position="23"/>
    </location>
</feature>
<feature type="chain" id="PRO_0000240359" description="Prolyl 3-hydroxylase 2">
    <location>
        <begin position="24"/>
        <end position="694"/>
    </location>
</feature>
<feature type="repeat" description="TPR 1">
    <location>
        <begin position="35"/>
        <end position="68"/>
    </location>
</feature>
<feature type="repeat" description="TPR 2">
    <location>
        <begin position="136"/>
        <end position="169"/>
    </location>
</feature>
<feature type="repeat" description="TPR 3">
    <location>
        <begin position="196"/>
        <end position="229"/>
    </location>
</feature>
<feature type="repeat" description="TPR 4">
    <location>
        <begin position="292"/>
        <end position="325"/>
    </location>
</feature>
<feature type="domain" description="Fe2OG dioxygenase" evidence="5">
    <location>
        <begin position="543"/>
        <end position="657"/>
    </location>
</feature>
<feature type="region of interest" description="Disordered" evidence="7">
    <location>
        <begin position="395"/>
        <end position="427"/>
    </location>
</feature>
<feature type="coiled-coil region" evidence="4">
    <location>
        <begin position="386"/>
        <end position="418"/>
    </location>
</feature>
<feature type="short sequence motif" description="Prevents secretion from ER" evidence="6">
    <location>
        <begin position="691"/>
        <end position="694"/>
    </location>
</feature>
<feature type="active site" evidence="1">
    <location>
        <position position="648"/>
    </location>
</feature>
<feature type="binding site">
    <location>
        <position position="566"/>
    </location>
    <ligand>
        <name>Fe cation</name>
        <dbReference type="ChEBI" id="CHEBI:24875"/>
    </ligand>
</feature>
<feature type="binding site">
    <location>
        <position position="568"/>
    </location>
    <ligand>
        <name>Fe cation</name>
        <dbReference type="ChEBI" id="CHEBI:24875"/>
    </ligand>
</feature>
<feature type="binding site">
    <location>
        <position position="638"/>
    </location>
    <ligand>
        <name>Fe cation</name>
        <dbReference type="ChEBI" id="CHEBI:24875"/>
    </ligand>
</feature>
<feature type="glycosylation site" description="N-linked (GlcNAc...) asparagine" evidence="4">
    <location>
        <position position="446"/>
    </location>
</feature>
<feature type="glycosylation site" description="N-linked (GlcNAc...) asparagine" evidence="4">
    <location>
        <position position="535"/>
    </location>
</feature>
<name>P3H2_CHICK</name>
<gene>
    <name evidence="3" type="primary">P3H2</name>
    <name evidence="3" type="synonym">LEPREL1</name>
</gene>
<comment type="function">
    <text evidence="2 3">Prolyl 3-hydroxylase that catalyzes the post-translational formation of 3-hydroxyproline on collagens (By similarity). Contributes to proline 3-hydroxylation of collagen COL4A1 and COL1A1 in tendons, the eye sclera and in the eye lens capsule (By similarity). Has high activity with the type IV collagen COL4A1, and lower activity with COL1A1. Catalyzes hydroxylation of the first Pro in Gly-Pro-Hyp sequences where Hyp is 4-hydroxyproline. Has no activity on substrates that lack 4-hydroxyproline in the third position (By similarity).</text>
</comment>
<comment type="catalytic activity">
    <reaction evidence="3">
        <text>L-prolyl-[collagen] + 2-oxoglutarate + O2 = trans-3-hydroxy-L-prolyl-[collagen] + succinate + CO2</text>
        <dbReference type="Rhea" id="RHEA:22872"/>
        <dbReference type="Rhea" id="RHEA-COMP:11676"/>
        <dbReference type="Rhea" id="RHEA-COMP:11678"/>
        <dbReference type="ChEBI" id="CHEBI:15379"/>
        <dbReference type="ChEBI" id="CHEBI:16526"/>
        <dbReference type="ChEBI" id="CHEBI:16810"/>
        <dbReference type="ChEBI" id="CHEBI:30031"/>
        <dbReference type="ChEBI" id="CHEBI:50342"/>
        <dbReference type="ChEBI" id="CHEBI:85428"/>
        <dbReference type="EC" id="1.14.11.7"/>
    </reaction>
</comment>
<comment type="cofactor">
    <cofactor evidence="3">
        <name>Fe cation</name>
        <dbReference type="ChEBI" id="CHEBI:24875"/>
    </cofactor>
</comment>
<comment type="cofactor">
    <cofactor evidence="3">
        <name>L-ascorbate</name>
        <dbReference type="ChEBI" id="CHEBI:38290"/>
    </cofactor>
</comment>
<comment type="subcellular location">
    <subcellularLocation>
        <location evidence="3 6">Endoplasmic reticulum</location>
    </subcellularLocation>
    <subcellularLocation>
        <location evidence="3">Sarcoplasmic reticulum</location>
    </subcellularLocation>
    <subcellularLocation>
        <location evidence="3">Golgi apparatus</location>
    </subcellularLocation>
</comment>
<comment type="similarity">
    <text evidence="8">Belongs to the leprecan family.</text>
</comment>
<keyword id="KW-0175">Coiled coil</keyword>
<keyword id="KW-0223">Dioxygenase</keyword>
<keyword id="KW-0256">Endoplasmic reticulum</keyword>
<keyword id="KW-0325">Glycoprotein</keyword>
<keyword id="KW-0333">Golgi apparatus</keyword>
<keyword id="KW-0408">Iron</keyword>
<keyword id="KW-0479">Metal-binding</keyword>
<keyword id="KW-0560">Oxidoreductase</keyword>
<keyword id="KW-1185">Reference proteome</keyword>
<keyword id="KW-0677">Repeat</keyword>
<keyword id="KW-0703">Sarcoplasmic reticulum</keyword>
<keyword id="KW-0732">Signal</keyword>
<keyword id="KW-0802">TPR repeat</keyword>
<keyword id="KW-0847">Vitamin C</keyword>
<proteinExistence type="evidence at transcript level"/>
<dbReference type="EC" id="1.14.11.7" evidence="3"/>
<dbReference type="EMBL" id="AY463529">
    <property type="protein sequence ID" value="AAS45238.1"/>
    <property type="molecule type" value="mRNA"/>
</dbReference>
<dbReference type="RefSeq" id="NP_001001530.1">
    <property type="nucleotide sequence ID" value="NM_001001530.1"/>
</dbReference>
<dbReference type="SMR" id="Q6JHU7"/>
<dbReference type="FunCoup" id="Q6JHU7">
    <property type="interactions" value="18"/>
</dbReference>
<dbReference type="STRING" id="9031.ENSGALP00000046986"/>
<dbReference type="GlyCosmos" id="Q6JHU7">
    <property type="glycosylation" value="2 sites, No reported glycans"/>
</dbReference>
<dbReference type="GlyGen" id="Q6JHU7">
    <property type="glycosylation" value="2 sites"/>
</dbReference>
<dbReference type="PaxDb" id="9031-ENSGALP00000011808"/>
<dbReference type="GeneID" id="414143"/>
<dbReference type="KEGG" id="gga:414143"/>
<dbReference type="CTD" id="55214"/>
<dbReference type="VEuPathDB" id="HostDB:geneid_414143"/>
<dbReference type="eggNOG" id="KOG4459">
    <property type="taxonomic scope" value="Eukaryota"/>
</dbReference>
<dbReference type="InParanoid" id="Q6JHU7"/>
<dbReference type="OrthoDB" id="8517835at2759"/>
<dbReference type="PhylomeDB" id="Q6JHU7"/>
<dbReference type="Reactome" id="R-GGA-1650814">
    <property type="pathway name" value="Collagen biosynthesis and modifying enzymes"/>
</dbReference>
<dbReference type="PRO" id="PR:Q6JHU7"/>
<dbReference type="Proteomes" id="UP000000539">
    <property type="component" value="Chromosome 9"/>
</dbReference>
<dbReference type="Bgee" id="ENSGALG00000040866">
    <property type="expression patterns" value="Expressed in spleen and 7 other cell types or tissues"/>
</dbReference>
<dbReference type="GO" id="GO:0005604">
    <property type="term" value="C:basement membrane"/>
    <property type="evidence" value="ECO:0000250"/>
    <property type="project" value="UniProtKB"/>
</dbReference>
<dbReference type="GO" id="GO:0005783">
    <property type="term" value="C:endoplasmic reticulum"/>
    <property type="evidence" value="ECO:0000250"/>
    <property type="project" value="UniProtKB"/>
</dbReference>
<dbReference type="GO" id="GO:0005794">
    <property type="term" value="C:Golgi apparatus"/>
    <property type="evidence" value="ECO:0000250"/>
    <property type="project" value="UniProtKB"/>
</dbReference>
<dbReference type="GO" id="GO:0016529">
    <property type="term" value="C:sarcoplasmic reticulum"/>
    <property type="evidence" value="ECO:0007669"/>
    <property type="project" value="UniProtKB-SubCell"/>
</dbReference>
<dbReference type="GO" id="GO:0005506">
    <property type="term" value="F:iron ion binding"/>
    <property type="evidence" value="ECO:0007669"/>
    <property type="project" value="InterPro"/>
</dbReference>
<dbReference type="GO" id="GO:0031418">
    <property type="term" value="F:L-ascorbic acid binding"/>
    <property type="evidence" value="ECO:0007669"/>
    <property type="project" value="UniProtKB-KW"/>
</dbReference>
<dbReference type="GO" id="GO:0019797">
    <property type="term" value="F:procollagen-proline 3-dioxygenase activity"/>
    <property type="evidence" value="ECO:0000250"/>
    <property type="project" value="UniProtKB"/>
</dbReference>
<dbReference type="GO" id="GO:0032963">
    <property type="term" value="P:collagen metabolic process"/>
    <property type="evidence" value="ECO:0000250"/>
    <property type="project" value="UniProtKB"/>
</dbReference>
<dbReference type="GO" id="GO:0008285">
    <property type="term" value="P:negative regulation of cell population proliferation"/>
    <property type="evidence" value="ECO:0000250"/>
    <property type="project" value="UniProtKB"/>
</dbReference>
<dbReference type="GO" id="GO:0019511">
    <property type="term" value="P:peptidyl-proline hydroxylation"/>
    <property type="evidence" value="ECO:0000250"/>
    <property type="project" value="UniProtKB"/>
</dbReference>
<dbReference type="FunFam" id="2.60.120.620:FF:000003">
    <property type="entry name" value="Prolyl 3-hydroxylase 2"/>
    <property type="match status" value="1"/>
</dbReference>
<dbReference type="Gene3D" id="2.60.120.620">
    <property type="entry name" value="q2cbj1_9rhob like domain"/>
    <property type="match status" value="1"/>
</dbReference>
<dbReference type="Gene3D" id="1.25.40.10">
    <property type="entry name" value="Tetratricopeptide repeat domain"/>
    <property type="match status" value="2"/>
</dbReference>
<dbReference type="InterPro" id="IPR056585">
    <property type="entry name" value="Leprecan_dom"/>
</dbReference>
<dbReference type="InterPro" id="IPR005123">
    <property type="entry name" value="Oxoglu/Fe-dep_dioxygenase_dom"/>
</dbReference>
<dbReference type="InterPro" id="IPR039575">
    <property type="entry name" value="P3H"/>
</dbReference>
<dbReference type="InterPro" id="IPR006620">
    <property type="entry name" value="Pro_4_hyd_alph"/>
</dbReference>
<dbReference type="InterPro" id="IPR044862">
    <property type="entry name" value="Pro_4_hyd_alph_FE2OG_OXY"/>
</dbReference>
<dbReference type="InterPro" id="IPR011990">
    <property type="entry name" value="TPR-like_helical_dom_sf"/>
</dbReference>
<dbReference type="PANTHER" id="PTHR14049">
    <property type="entry name" value="LEPRECAN 1"/>
    <property type="match status" value="1"/>
</dbReference>
<dbReference type="PANTHER" id="PTHR14049:SF1">
    <property type="entry name" value="PROLYL 3-HYDROXYLASE 2"/>
    <property type="match status" value="1"/>
</dbReference>
<dbReference type="Pfam" id="PF13640">
    <property type="entry name" value="2OG-FeII_Oxy_3"/>
    <property type="match status" value="1"/>
</dbReference>
<dbReference type="Pfam" id="PF23557">
    <property type="entry name" value="TPR_leprecan"/>
    <property type="match status" value="1"/>
</dbReference>
<dbReference type="SMART" id="SM00702">
    <property type="entry name" value="P4Hc"/>
    <property type="match status" value="1"/>
</dbReference>
<dbReference type="SUPFAM" id="SSF48452">
    <property type="entry name" value="TPR-like"/>
    <property type="match status" value="1"/>
</dbReference>
<dbReference type="PROSITE" id="PS00014">
    <property type="entry name" value="ER_TARGET"/>
    <property type="match status" value="1"/>
</dbReference>
<dbReference type="PROSITE" id="PS51471">
    <property type="entry name" value="FE2OG_OXY"/>
    <property type="match status" value="1"/>
</dbReference>
<reference key="1">
    <citation type="journal article" date="2004" name="J. Biol. Chem.">
        <title>Prolyl 3-hydroxylase 1, enzyme characterization and identification of a novel family of enzymes.</title>
        <authorList>
            <person name="Vranka J.A."/>
            <person name="Sakai L.Y."/>
            <person name="Bachinger H.P."/>
        </authorList>
    </citation>
    <scope>NUCLEOTIDE SEQUENCE [MRNA]</scope>
</reference>